<gene>
    <name type="primary">gabT</name>
    <name type="ordered locus">BQ2027_MB2620</name>
</gene>
<protein>
    <recommendedName>
        <fullName>4-aminobutyrate aminotransferase</fullName>
        <ecNumber>2.6.1.19</ecNumber>
    </recommendedName>
    <alternativeName>
        <fullName>(S)-3-amino-2-methylpropionate transaminase</fullName>
        <ecNumber>2.6.1.22</ecNumber>
    </alternativeName>
    <alternativeName>
        <fullName>GABA aminotransferase</fullName>
        <shortName>GABA-AT</shortName>
    </alternativeName>
    <alternativeName>
        <fullName>Gamma-amino-N-butyrate transaminase</fullName>
        <shortName>GABA transaminase</shortName>
    </alternativeName>
    <alternativeName>
        <fullName>Glutamate:succinic semialdehyde transaminase</fullName>
    </alternativeName>
    <alternativeName>
        <fullName>L-AIBAT</fullName>
    </alternativeName>
</protein>
<organism>
    <name type="scientific">Mycobacterium bovis (strain ATCC BAA-935 / AF2122/97)</name>
    <dbReference type="NCBI Taxonomy" id="233413"/>
    <lineage>
        <taxon>Bacteria</taxon>
        <taxon>Bacillati</taxon>
        <taxon>Actinomycetota</taxon>
        <taxon>Actinomycetes</taxon>
        <taxon>Mycobacteriales</taxon>
        <taxon>Mycobacteriaceae</taxon>
        <taxon>Mycobacterium</taxon>
        <taxon>Mycobacterium tuberculosis complex</taxon>
    </lineage>
</organism>
<proteinExistence type="inferred from homology"/>
<reference key="1">
    <citation type="journal article" date="2003" name="Proc. Natl. Acad. Sci. U.S.A.">
        <title>The complete genome sequence of Mycobacterium bovis.</title>
        <authorList>
            <person name="Garnier T."/>
            <person name="Eiglmeier K."/>
            <person name="Camus J.-C."/>
            <person name="Medina N."/>
            <person name="Mansoor H."/>
            <person name="Pryor M."/>
            <person name="Duthoy S."/>
            <person name="Grondin S."/>
            <person name="Lacroix C."/>
            <person name="Monsempe C."/>
            <person name="Simon S."/>
            <person name="Harris B."/>
            <person name="Atkin R."/>
            <person name="Doggett J."/>
            <person name="Mayes R."/>
            <person name="Keating L."/>
            <person name="Wheeler P.R."/>
            <person name="Parkhill J."/>
            <person name="Barrell B.G."/>
            <person name="Cole S.T."/>
            <person name="Gordon S.V."/>
            <person name="Hewinson R.G."/>
        </authorList>
    </citation>
    <scope>NUCLEOTIDE SEQUENCE [LARGE SCALE GENOMIC DNA]</scope>
    <source>
        <strain>ATCC BAA-935 / AF2122/97</strain>
    </source>
</reference>
<reference key="2">
    <citation type="journal article" date="2017" name="Genome Announc.">
        <title>Updated reference genome sequence and annotation of Mycobacterium bovis AF2122/97.</title>
        <authorList>
            <person name="Malone K.M."/>
            <person name="Farrell D."/>
            <person name="Stuber T.P."/>
            <person name="Schubert O.T."/>
            <person name="Aebersold R."/>
            <person name="Robbe-Austerman S."/>
            <person name="Gordon S.V."/>
        </authorList>
    </citation>
    <scope>NUCLEOTIDE SEQUENCE [LARGE SCALE GENOMIC DNA]</scope>
    <scope>GENOME REANNOTATION</scope>
    <source>
        <strain>ATCC BAA-935 / AF2122/97</strain>
    </source>
</reference>
<keyword id="KW-0032">Aminotransferase</keyword>
<keyword id="KW-0663">Pyridoxal phosphate</keyword>
<keyword id="KW-1185">Reference proteome</keyword>
<keyword id="KW-0808">Transferase</keyword>
<accession>P63505</accession>
<accession>A0A1R3Y220</accession>
<accession>Q50632</accession>
<accession>X2BL48</accession>
<evidence type="ECO:0000250" key="1"/>
<evidence type="ECO:0000305" key="2"/>
<comment type="catalytic activity">
    <reaction>
        <text>4-aminobutanoate + 2-oxoglutarate = succinate semialdehyde + L-glutamate</text>
        <dbReference type="Rhea" id="RHEA:23352"/>
        <dbReference type="ChEBI" id="CHEBI:16810"/>
        <dbReference type="ChEBI" id="CHEBI:29985"/>
        <dbReference type="ChEBI" id="CHEBI:57706"/>
        <dbReference type="ChEBI" id="CHEBI:59888"/>
        <dbReference type="EC" id="2.6.1.19"/>
    </reaction>
</comment>
<comment type="catalytic activity">
    <reaction>
        <text>(S)-3-amino-2-methylpropanoate + 2-oxoglutarate = 2-methyl-3-oxopropanoate + L-glutamate</text>
        <dbReference type="Rhea" id="RHEA:13993"/>
        <dbReference type="ChEBI" id="CHEBI:16810"/>
        <dbReference type="ChEBI" id="CHEBI:29985"/>
        <dbReference type="ChEBI" id="CHEBI:57700"/>
        <dbReference type="ChEBI" id="CHEBI:58655"/>
        <dbReference type="EC" id="2.6.1.22"/>
    </reaction>
</comment>
<comment type="cofactor">
    <cofactor>
        <name>pyridoxal 5'-phosphate</name>
        <dbReference type="ChEBI" id="CHEBI:597326"/>
    </cofactor>
</comment>
<comment type="pathway">
    <text>Amino-acid degradation; 4-aminobutanoate degradation.</text>
</comment>
<comment type="similarity">
    <text evidence="2">Belongs to the class-III pyridoxal-phosphate-dependent aminotransferase family.</text>
</comment>
<name>GABT_MYCBO</name>
<sequence length="449" mass="46813">MASLQQSRRLVTEIPGPASQALTHRRAAAVSSGVGVTLPVFVARAGGGIVEDVDGNRLIDLGSGIAVTTIGNSSPRVVDAVRTQVAEFTHTCFMVTPYEGYVAVAEQLNRITPGSGPKRSVLFNSGAEAVENAVKIARSYTGKPAVVAFDHAYHGRTNLTMALTAKSMPYKSGFGPFAPEIYRAPLSYPYRDGLLDKQLATNGELAAARAIGVIDKQVGANNLAALVIEPIQGEGGFIVPAEGFLPALLDWCRKNHVVFIADEVQTGFARTGAMFACEHEGPDGLEPDLICTAKGIADGLPLSAVTGRAEIMNAPHVGGLGGTFGGNPVACAAALATIATIESDGLIERARQIERLVTDRLTTLQAVDDRIGDVRGRGAMIAVELVKSGTTEPDAGLTERLATAAHAAGVIILTCGMFGNIIRLLPPLTIGDELLSEGLDIVCAILADL</sequence>
<dbReference type="EC" id="2.6.1.19"/>
<dbReference type="EC" id="2.6.1.22"/>
<dbReference type="EMBL" id="LT708304">
    <property type="protein sequence ID" value="SIU01238.1"/>
    <property type="molecule type" value="Genomic_DNA"/>
</dbReference>
<dbReference type="RefSeq" id="NP_856266.1">
    <property type="nucleotide sequence ID" value="NC_002945.3"/>
</dbReference>
<dbReference type="RefSeq" id="WP_003413395.1">
    <property type="nucleotide sequence ID" value="NC_002945.4"/>
</dbReference>
<dbReference type="SMR" id="P63505"/>
<dbReference type="GeneID" id="45426591"/>
<dbReference type="KEGG" id="mbo:BQ2027_MB2620"/>
<dbReference type="PATRIC" id="fig|233413.5.peg.2881"/>
<dbReference type="UniPathway" id="UPA00733"/>
<dbReference type="Proteomes" id="UP000001419">
    <property type="component" value="Chromosome"/>
</dbReference>
<dbReference type="GO" id="GO:0047298">
    <property type="term" value="F:(S)-3-amino-2-methylpropionate transaminase activity"/>
    <property type="evidence" value="ECO:0007669"/>
    <property type="project" value="UniProtKB-EC"/>
</dbReference>
<dbReference type="GO" id="GO:0034386">
    <property type="term" value="F:4-aminobutyrate:2-oxoglutarate transaminase activity"/>
    <property type="evidence" value="ECO:0007669"/>
    <property type="project" value="UniProtKB-EC"/>
</dbReference>
<dbReference type="GO" id="GO:0042802">
    <property type="term" value="F:identical protein binding"/>
    <property type="evidence" value="ECO:0007669"/>
    <property type="project" value="TreeGrafter"/>
</dbReference>
<dbReference type="GO" id="GO:0030170">
    <property type="term" value="F:pyridoxal phosphate binding"/>
    <property type="evidence" value="ECO:0007669"/>
    <property type="project" value="InterPro"/>
</dbReference>
<dbReference type="GO" id="GO:0009450">
    <property type="term" value="P:gamma-aminobutyric acid catabolic process"/>
    <property type="evidence" value="ECO:0007669"/>
    <property type="project" value="UniProtKB-UniPathway"/>
</dbReference>
<dbReference type="CDD" id="cd00610">
    <property type="entry name" value="OAT_like"/>
    <property type="match status" value="1"/>
</dbReference>
<dbReference type="FunFam" id="3.40.640.10:FF:000013">
    <property type="entry name" value="4-aminobutyrate aminotransferase"/>
    <property type="match status" value="1"/>
</dbReference>
<dbReference type="FunFam" id="3.90.1150.10:FF:000022">
    <property type="entry name" value="4-aminobutyrate aminotransferase"/>
    <property type="match status" value="1"/>
</dbReference>
<dbReference type="Gene3D" id="3.90.1150.10">
    <property type="entry name" value="Aspartate Aminotransferase, domain 1"/>
    <property type="match status" value="1"/>
</dbReference>
<dbReference type="Gene3D" id="3.40.640.10">
    <property type="entry name" value="Type I PLP-dependent aspartate aminotransferase-like (Major domain)"/>
    <property type="match status" value="1"/>
</dbReference>
<dbReference type="InterPro" id="IPR004632">
    <property type="entry name" value="4NH2But_aminotransferase_bac"/>
</dbReference>
<dbReference type="InterPro" id="IPR005814">
    <property type="entry name" value="Aminotrans_3"/>
</dbReference>
<dbReference type="InterPro" id="IPR049704">
    <property type="entry name" value="Aminotrans_3_PPA_site"/>
</dbReference>
<dbReference type="InterPro" id="IPR050103">
    <property type="entry name" value="Class-III_PLP-dep_AT"/>
</dbReference>
<dbReference type="InterPro" id="IPR015424">
    <property type="entry name" value="PyrdxlP-dep_Trfase"/>
</dbReference>
<dbReference type="InterPro" id="IPR015421">
    <property type="entry name" value="PyrdxlP-dep_Trfase_major"/>
</dbReference>
<dbReference type="InterPro" id="IPR015422">
    <property type="entry name" value="PyrdxlP-dep_Trfase_small"/>
</dbReference>
<dbReference type="NCBIfam" id="TIGR00700">
    <property type="entry name" value="GABAtrnsam"/>
    <property type="match status" value="1"/>
</dbReference>
<dbReference type="NCBIfam" id="NF004714">
    <property type="entry name" value="PRK06058.1"/>
    <property type="match status" value="1"/>
</dbReference>
<dbReference type="PANTHER" id="PTHR11986">
    <property type="entry name" value="AMINOTRANSFERASE CLASS III"/>
    <property type="match status" value="1"/>
</dbReference>
<dbReference type="Pfam" id="PF00202">
    <property type="entry name" value="Aminotran_3"/>
    <property type="match status" value="1"/>
</dbReference>
<dbReference type="PIRSF" id="PIRSF000521">
    <property type="entry name" value="Transaminase_4ab_Lys_Orn"/>
    <property type="match status" value="1"/>
</dbReference>
<dbReference type="SUPFAM" id="SSF53383">
    <property type="entry name" value="PLP-dependent transferases"/>
    <property type="match status" value="1"/>
</dbReference>
<dbReference type="PROSITE" id="PS00600">
    <property type="entry name" value="AA_TRANSFER_CLASS_3"/>
    <property type="match status" value="1"/>
</dbReference>
<feature type="chain" id="PRO_0000120387" description="4-aminobutyrate aminotransferase">
    <location>
        <begin position="1"/>
        <end position="449"/>
    </location>
</feature>
<feature type="modified residue" description="N6-(pyridoxal phosphate)lysine" evidence="1">
    <location>
        <position position="294"/>
    </location>
</feature>